<sequence>MSYLVVTIKVILITGMPGSGKSEFAKLLKERGAKVIVMSDVVRKRYSIEAKPGERLMDFAKRLREIYGDGVVARLCVEELGTSNHDLVVFDGVRSLAEVEEFKRLLGDSVYIVAVHSPPKIRYKRMIERLRSDDSKEISELIRRDREELKLGIGEVIAMADYIITNDSNYEEFKRRCEEVTDRVLKNG</sequence>
<proteinExistence type="inferred from homology"/>
<accession>C3MPH4</accession>
<dbReference type="EMBL" id="CP001399">
    <property type="protein sequence ID" value="ACP35287.1"/>
    <property type="molecule type" value="Genomic_DNA"/>
</dbReference>
<dbReference type="RefSeq" id="WP_009989191.1">
    <property type="nucleotide sequence ID" value="NC_012589.1"/>
</dbReference>
<dbReference type="SMR" id="C3MPH4"/>
<dbReference type="KEGG" id="sis:LS215_1277"/>
<dbReference type="HOGENOM" id="CLU_096329_1_0_2"/>
<dbReference type="OrthoDB" id="85381at2157"/>
<dbReference type="Proteomes" id="UP000001747">
    <property type="component" value="Chromosome"/>
</dbReference>
<dbReference type="GO" id="GO:0005524">
    <property type="term" value="F:ATP binding"/>
    <property type="evidence" value="ECO:0007669"/>
    <property type="project" value="UniProtKB-UniRule"/>
</dbReference>
<dbReference type="CDD" id="cd02022">
    <property type="entry name" value="DPCK"/>
    <property type="match status" value="1"/>
</dbReference>
<dbReference type="Gene3D" id="3.40.50.300">
    <property type="entry name" value="P-loop containing nucleotide triphosphate hydrolases"/>
    <property type="match status" value="1"/>
</dbReference>
<dbReference type="HAMAP" id="MF_01111">
    <property type="entry name" value="UPF0200"/>
    <property type="match status" value="1"/>
</dbReference>
<dbReference type="InterPro" id="IPR022970">
    <property type="entry name" value="NTP_hydrolase-rel"/>
</dbReference>
<dbReference type="InterPro" id="IPR027417">
    <property type="entry name" value="P-loop_NTPase"/>
</dbReference>
<dbReference type="PANTHER" id="PTHR41930:SF1">
    <property type="entry name" value="DEPHOSPHO-COA KINASE"/>
    <property type="match status" value="1"/>
</dbReference>
<dbReference type="PANTHER" id="PTHR41930">
    <property type="entry name" value="UPF0200 PROTEIN MJ1399"/>
    <property type="match status" value="1"/>
</dbReference>
<dbReference type="Pfam" id="PF13238">
    <property type="entry name" value="AAA_18"/>
    <property type="match status" value="1"/>
</dbReference>
<dbReference type="SUPFAM" id="SSF52540">
    <property type="entry name" value="P-loop containing nucleoside triphosphate hydrolases"/>
    <property type="match status" value="1"/>
</dbReference>
<comment type="similarity">
    <text evidence="1">Belongs to the UPF0200 family.</text>
</comment>
<keyword id="KW-0067">ATP-binding</keyword>
<keyword id="KW-0547">Nucleotide-binding</keyword>
<feature type="chain" id="PRO_1000213577" description="UPF0200 protein LS215_1277">
    <location>
        <begin position="1"/>
        <end position="188"/>
    </location>
</feature>
<feature type="binding site" evidence="1">
    <location>
        <begin position="15"/>
        <end position="22"/>
    </location>
    <ligand>
        <name>ATP</name>
        <dbReference type="ChEBI" id="CHEBI:30616"/>
    </ligand>
</feature>
<reference key="1">
    <citation type="journal article" date="2009" name="Proc. Natl. Acad. Sci. U.S.A.">
        <title>Biogeography of the Sulfolobus islandicus pan-genome.</title>
        <authorList>
            <person name="Reno M.L."/>
            <person name="Held N.L."/>
            <person name="Fields C.J."/>
            <person name="Burke P.V."/>
            <person name="Whitaker R.J."/>
        </authorList>
    </citation>
    <scope>NUCLEOTIDE SEQUENCE [LARGE SCALE GENOMIC DNA]</scope>
    <source>
        <strain>L.S.2.15 / Lassen #1</strain>
    </source>
</reference>
<protein>
    <recommendedName>
        <fullName evidence="1">UPF0200 protein LS215_1277</fullName>
    </recommendedName>
</protein>
<organism>
    <name type="scientific">Saccharolobus islandicus (strain L.S.2.15 / Lassen #1)</name>
    <name type="common">Sulfolobus islandicus</name>
    <dbReference type="NCBI Taxonomy" id="429572"/>
    <lineage>
        <taxon>Archaea</taxon>
        <taxon>Thermoproteota</taxon>
        <taxon>Thermoprotei</taxon>
        <taxon>Sulfolobales</taxon>
        <taxon>Sulfolobaceae</taxon>
        <taxon>Saccharolobus</taxon>
    </lineage>
</organism>
<name>Y1277_SACI2</name>
<gene>
    <name type="ordered locus">LS215_1277</name>
</gene>
<evidence type="ECO:0000255" key="1">
    <source>
        <dbReference type="HAMAP-Rule" id="MF_01111"/>
    </source>
</evidence>